<reference key="1">
    <citation type="journal article" date="1993" name="Eur. J. Biochem.">
        <title>Complete amino acid sequences of five dimeric and four monomeric forms of metallothionein from the edible mussel Mytilus edulis.</title>
        <authorList>
            <person name="Mackay E.A."/>
            <person name="Overnell J."/>
            <person name="Dunbar B."/>
            <person name="Davidson I."/>
            <person name="Hunziker P.E."/>
            <person name="Kaegi J.H.R."/>
            <person name="Fothergill J.E."/>
        </authorList>
    </citation>
    <scope>PROTEIN SEQUENCE</scope>
</reference>
<dbReference type="PIR" id="S39420">
    <property type="entry name" value="S39420"/>
</dbReference>
<dbReference type="PIR" id="S47576">
    <property type="entry name" value="S47576"/>
</dbReference>
<dbReference type="SMR" id="P80251"/>
<dbReference type="GO" id="GO:0046872">
    <property type="term" value="F:metal ion binding"/>
    <property type="evidence" value="ECO:0007669"/>
    <property type="project" value="UniProtKB-KW"/>
</dbReference>
<dbReference type="InterPro" id="IPR001008">
    <property type="entry name" value="Metalthion_mollusc"/>
</dbReference>
<dbReference type="PRINTS" id="PR00875">
    <property type="entry name" value="MTMOLLUSC"/>
</dbReference>
<protein>
    <recommendedName>
        <fullName>Metallothionein 20-I isoforms A and B</fullName>
    </recommendedName>
    <alternativeName>
        <fullName>MT-20-IA and MT-20-IB</fullName>
    </alternativeName>
</protein>
<organism>
    <name type="scientific">Mytilus edulis</name>
    <name type="common">Blue mussel</name>
    <dbReference type="NCBI Taxonomy" id="6550"/>
    <lineage>
        <taxon>Eukaryota</taxon>
        <taxon>Metazoa</taxon>
        <taxon>Spiralia</taxon>
        <taxon>Lophotrochozoa</taxon>
        <taxon>Mollusca</taxon>
        <taxon>Bivalvia</taxon>
        <taxon>Autobranchia</taxon>
        <taxon>Pteriomorphia</taxon>
        <taxon>Mytilida</taxon>
        <taxon>Mytiloidea</taxon>
        <taxon>Mytilidae</taxon>
        <taxon>Mytilinae</taxon>
        <taxon>Mytilus</taxon>
    </lineage>
</organism>
<proteinExistence type="evidence at protein level"/>
<name>MT21_MYTED</name>
<keyword id="KW-0104">Cadmium</keyword>
<keyword id="KW-0903">Direct protein sequencing</keyword>
<keyword id="KW-0479">Metal-binding</keyword>
<keyword id="KW-0480">Metal-thiolate cluster</keyword>
<evidence type="ECO:0000250" key="1">
    <source>
        <dbReference type="UniProtKB" id="P33187"/>
    </source>
</evidence>
<evidence type="ECO:0000305" key="2"/>
<sequence>PGPCNCIETNVCICGTGCSGKCCRCGDACKCASGCGCSGCKVVCKCSGTCKCGCDCTGPTNCKCESGCSCK</sequence>
<comment type="function">
    <text>The metallothioneins are involved in the cellular sequestration of toxic metal ions.</text>
</comment>
<comment type="subunit">
    <text>Homodimer.</text>
</comment>
<comment type="induction">
    <text>By cadmium.</text>
</comment>
<comment type="similarity">
    <text evidence="2">Belongs to the metallothionein superfamily. Type 2 family.</text>
</comment>
<feature type="chain" id="PRO_0000197329" description="Metallothionein 20-I isoforms A and B">
    <location>
        <begin position="1"/>
        <end position="71"/>
    </location>
</feature>
<feature type="binding site" evidence="1">
    <location>
        <position position="14"/>
    </location>
    <ligand>
        <name>Cd(2+)</name>
        <dbReference type="ChEBI" id="CHEBI:48775"/>
        <label>1</label>
    </ligand>
</feature>
<feature type="binding site" evidence="1">
    <location>
        <position position="18"/>
    </location>
    <ligand>
        <name>Cd(2+)</name>
        <dbReference type="ChEBI" id="CHEBI:48775"/>
        <label>1</label>
    </ligand>
</feature>
<feature type="binding site" evidence="1">
    <location>
        <position position="18"/>
    </location>
    <ligand>
        <name>Cd(2+)</name>
        <dbReference type="ChEBI" id="CHEBI:48775"/>
        <label>2</label>
    </ligand>
</feature>
<feature type="binding site" evidence="1">
    <location>
        <position position="23"/>
    </location>
    <ligand>
        <name>Cd(2+)</name>
        <dbReference type="ChEBI" id="CHEBI:48775"/>
        <label>2</label>
    </ligand>
</feature>
<feature type="binding site" evidence="1">
    <location>
        <position position="25"/>
    </location>
    <ligand>
        <name>Cd(2+)</name>
        <dbReference type="ChEBI" id="CHEBI:48775"/>
        <label>3</label>
    </ligand>
</feature>
<feature type="binding site" evidence="1">
    <location>
        <position position="29"/>
    </location>
    <ligand>
        <name>Cd(2+)</name>
        <dbReference type="ChEBI" id="CHEBI:48775"/>
        <label>3</label>
    </ligand>
</feature>
<feature type="binding site" evidence="1">
    <location>
        <position position="31"/>
    </location>
    <ligand>
        <name>Cd(2+)</name>
        <dbReference type="ChEBI" id="CHEBI:48775"/>
        <label>1</label>
    </ligand>
</feature>
<feature type="binding site" evidence="1">
    <location>
        <position position="31"/>
    </location>
    <ligand>
        <name>Cd(2+)</name>
        <dbReference type="ChEBI" id="CHEBI:48775"/>
        <label>3</label>
    </ligand>
</feature>
<feature type="binding site" evidence="1">
    <location>
        <position position="35"/>
    </location>
    <ligand>
        <name>Cd(2+)</name>
        <dbReference type="ChEBI" id="CHEBI:48775"/>
        <label>1</label>
    </ligand>
</feature>
<feature type="binding site" evidence="1">
    <location>
        <position position="37"/>
    </location>
    <ligand>
        <name>Cd(2+)</name>
        <dbReference type="ChEBI" id="CHEBI:48775"/>
        <label>2</label>
    </ligand>
</feature>
<feature type="binding site" evidence="1">
    <location>
        <position position="40"/>
    </location>
    <ligand>
        <name>Cd(2+)</name>
        <dbReference type="ChEBI" id="CHEBI:48775"/>
        <label>2</label>
    </ligand>
</feature>
<feature type="binding site" evidence="1">
    <location>
        <position position="40"/>
    </location>
    <ligand>
        <name>Cd(2+)</name>
        <dbReference type="ChEBI" id="CHEBI:48775"/>
        <label>3</label>
    </ligand>
</feature>
<feature type="binding site" evidence="1">
    <location>
        <position position="44"/>
    </location>
    <ligand>
        <name>Cd(2+)</name>
        <dbReference type="ChEBI" id="CHEBI:48775"/>
        <label>4</label>
    </ligand>
</feature>
<feature type="binding site" evidence="1">
    <location>
        <position position="46"/>
    </location>
    <ligand>
        <name>Cd(2+)</name>
        <dbReference type="ChEBI" id="CHEBI:48775"/>
        <label>5</label>
    </ligand>
</feature>
<feature type="binding site" evidence="1">
    <location>
        <position position="50"/>
    </location>
    <ligand>
        <name>Cd(2+)</name>
        <dbReference type="ChEBI" id="CHEBI:48775"/>
        <label>5</label>
    </ligand>
</feature>
<feature type="binding site" evidence="1">
    <location>
        <position position="52"/>
    </location>
    <ligand>
        <name>Cd(2+)</name>
        <dbReference type="ChEBI" id="CHEBI:48775"/>
        <label>5</label>
    </ligand>
</feature>
<feature type="binding site" evidence="1">
    <location>
        <position position="52"/>
    </location>
    <ligand>
        <name>Cd(2+)</name>
        <dbReference type="ChEBI" id="CHEBI:48775"/>
        <label>6</label>
    </ligand>
</feature>
<feature type="binding site" evidence="1">
    <location>
        <position position="56"/>
    </location>
    <ligand>
        <name>Cd(2+)</name>
        <dbReference type="ChEBI" id="CHEBI:48775"/>
        <label>4</label>
    </ligand>
</feature>
<feature type="binding site" evidence="1">
    <location>
        <position position="56"/>
    </location>
    <ligand>
        <name>Cd(2+)</name>
        <dbReference type="ChEBI" id="CHEBI:48775"/>
        <label>5</label>
    </ligand>
</feature>
<feature type="binding site" evidence="1">
    <location>
        <position position="62"/>
    </location>
    <ligand>
        <name>Cd(2+)</name>
        <dbReference type="ChEBI" id="CHEBI:48775"/>
        <label>4</label>
    </ligand>
</feature>
<feature type="binding site" evidence="1">
    <location>
        <position position="64"/>
    </location>
    <ligand>
        <name>Cd(2+)</name>
        <dbReference type="ChEBI" id="CHEBI:48775"/>
        <label>6</label>
    </ligand>
</feature>
<feature type="binding site" evidence="1">
    <location>
        <position position="68"/>
    </location>
    <ligand>
        <name>Cd(2+)</name>
        <dbReference type="ChEBI" id="CHEBI:48775"/>
        <label>6</label>
    </ligand>
</feature>
<feature type="binding site" evidence="1">
    <location>
        <position position="70"/>
    </location>
    <ligand>
        <name>Cd(2+)</name>
        <dbReference type="ChEBI" id="CHEBI:48775"/>
        <label>4</label>
    </ligand>
</feature>
<feature type="binding site" evidence="1">
    <location>
        <position position="70"/>
    </location>
    <ligand>
        <name>Cd(2+)</name>
        <dbReference type="ChEBI" id="CHEBI:48775"/>
        <label>6</label>
    </ligand>
</feature>
<feature type="sequence variant" description="In MT-20-IB.">
    <original>S</original>
    <variation>A</variation>
    <location>
        <position position="66"/>
    </location>
</feature>
<accession>P80251</accession>
<accession>P80257</accession>